<reference key="1">
    <citation type="journal article" date="2006" name="J. Bacteriol.">
        <title>Comparison of the genome sequence of the poultry pathogen Bordetella avium with those of B. bronchiseptica, B. pertussis, and B. parapertussis reveals extensive diversity in surface structures associated with host interaction.</title>
        <authorList>
            <person name="Sebaihia M."/>
            <person name="Preston A."/>
            <person name="Maskell D.J."/>
            <person name="Kuzmiak H."/>
            <person name="Connell T.D."/>
            <person name="King N.D."/>
            <person name="Orndorff P.E."/>
            <person name="Miyamoto D.M."/>
            <person name="Thomson N.R."/>
            <person name="Harris D."/>
            <person name="Goble A."/>
            <person name="Lord A."/>
            <person name="Murphy L."/>
            <person name="Quail M.A."/>
            <person name="Rutter S."/>
            <person name="Squares R."/>
            <person name="Squares S."/>
            <person name="Woodward J."/>
            <person name="Parkhill J."/>
            <person name="Temple L.M."/>
        </authorList>
    </citation>
    <scope>NUCLEOTIDE SEQUENCE [LARGE SCALE GENOMIC DNA]</scope>
    <source>
        <strain>197N</strain>
    </source>
</reference>
<name>TRUB_BORA1</name>
<dbReference type="EC" id="5.4.99.25" evidence="1"/>
<dbReference type="EMBL" id="AM167904">
    <property type="protein sequence ID" value="CAJ50002.1"/>
    <property type="molecule type" value="Genomic_DNA"/>
</dbReference>
<dbReference type="RefSeq" id="WP_012418053.1">
    <property type="nucleotide sequence ID" value="NC_010645.1"/>
</dbReference>
<dbReference type="SMR" id="Q2KXZ0"/>
<dbReference type="STRING" id="360910.BAV2392"/>
<dbReference type="GeneID" id="92934433"/>
<dbReference type="KEGG" id="bav:BAV2392"/>
<dbReference type="eggNOG" id="COG0130">
    <property type="taxonomic scope" value="Bacteria"/>
</dbReference>
<dbReference type="HOGENOM" id="CLU_032087_2_0_4"/>
<dbReference type="OrthoDB" id="9802309at2"/>
<dbReference type="Proteomes" id="UP000001977">
    <property type="component" value="Chromosome"/>
</dbReference>
<dbReference type="GO" id="GO:0003723">
    <property type="term" value="F:RNA binding"/>
    <property type="evidence" value="ECO:0007669"/>
    <property type="project" value="InterPro"/>
</dbReference>
<dbReference type="GO" id="GO:0160148">
    <property type="term" value="F:tRNA pseudouridine(55) synthase activity"/>
    <property type="evidence" value="ECO:0007669"/>
    <property type="project" value="UniProtKB-EC"/>
</dbReference>
<dbReference type="GO" id="GO:1990481">
    <property type="term" value="P:mRNA pseudouridine synthesis"/>
    <property type="evidence" value="ECO:0007669"/>
    <property type="project" value="TreeGrafter"/>
</dbReference>
<dbReference type="GO" id="GO:0031119">
    <property type="term" value="P:tRNA pseudouridine synthesis"/>
    <property type="evidence" value="ECO:0007669"/>
    <property type="project" value="UniProtKB-UniRule"/>
</dbReference>
<dbReference type="CDD" id="cd02573">
    <property type="entry name" value="PseudoU_synth_EcTruB"/>
    <property type="match status" value="1"/>
</dbReference>
<dbReference type="Gene3D" id="3.30.2350.10">
    <property type="entry name" value="Pseudouridine synthase"/>
    <property type="match status" value="1"/>
</dbReference>
<dbReference type="HAMAP" id="MF_01080">
    <property type="entry name" value="TruB_bact"/>
    <property type="match status" value="1"/>
</dbReference>
<dbReference type="InterPro" id="IPR020103">
    <property type="entry name" value="PsdUridine_synth_cat_dom_sf"/>
</dbReference>
<dbReference type="InterPro" id="IPR002501">
    <property type="entry name" value="PsdUridine_synth_N"/>
</dbReference>
<dbReference type="InterPro" id="IPR014780">
    <property type="entry name" value="tRNA_psdUridine_synth_TruB"/>
</dbReference>
<dbReference type="InterPro" id="IPR032819">
    <property type="entry name" value="TruB_C"/>
</dbReference>
<dbReference type="NCBIfam" id="TIGR00431">
    <property type="entry name" value="TruB"/>
    <property type="match status" value="1"/>
</dbReference>
<dbReference type="PANTHER" id="PTHR13767:SF2">
    <property type="entry name" value="PSEUDOURIDYLATE SYNTHASE TRUB1"/>
    <property type="match status" value="1"/>
</dbReference>
<dbReference type="PANTHER" id="PTHR13767">
    <property type="entry name" value="TRNA-PSEUDOURIDINE SYNTHASE"/>
    <property type="match status" value="1"/>
</dbReference>
<dbReference type="Pfam" id="PF16198">
    <property type="entry name" value="TruB_C_2"/>
    <property type="match status" value="1"/>
</dbReference>
<dbReference type="Pfam" id="PF01509">
    <property type="entry name" value="TruB_N"/>
    <property type="match status" value="1"/>
</dbReference>
<dbReference type="SUPFAM" id="SSF55120">
    <property type="entry name" value="Pseudouridine synthase"/>
    <property type="match status" value="1"/>
</dbReference>
<protein>
    <recommendedName>
        <fullName evidence="1">tRNA pseudouridine synthase B</fullName>
        <ecNumber evidence="1">5.4.99.25</ecNumber>
    </recommendedName>
    <alternativeName>
        <fullName evidence="1">tRNA pseudouridine(55) synthase</fullName>
        <shortName evidence="1">Psi55 synthase</shortName>
    </alternativeName>
    <alternativeName>
        <fullName evidence="1">tRNA pseudouridylate synthase</fullName>
    </alternativeName>
    <alternativeName>
        <fullName evidence="1">tRNA-uridine isomerase</fullName>
    </alternativeName>
</protein>
<evidence type="ECO:0000255" key="1">
    <source>
        <dbReference type="HAMAP-Rule" id="MF_01080"/>
    </source>
</evidence>
<accession>Q2KXZ0</accession>
<gene>
    <name evidence="1" type="primary">truB</name>
    <name type="ordered locus">BAV2392</name>
</gene>
<sequence length="244" mass="26479">MAKRRGQPLDGVLLLDKPVGLSSNHALQRAKRTLDAAKAGHTGTLDPFATGLLLCCMGRATKISGAMLNADKTYRATLQFGEETDSGDLTGNIVARAPEDFPGVEEANLREVLSRFQGSIEQIPPMYSALKRDGKPLYEYARAGIELERPPRRVMIYRIELLSFTGHQAEIDVACSKGTYIRTLAQDIGRALGCYAHLFALRRTQVGPFSLDRAVTLDALQAMTDPKAALLALNELPAGLLPAT</sequence>
<keyword id="KW-0413">Isomerase</keyword>
<keyword id="KW-1185">Reference proteome</keyword>
<keyword id="KW-0819">tRNA processing</keyword>
<comment type="function">
    <text evidence="1">Responsible for synthesis of pseudouridine from uracil-55 in the psi GC loop of transfer RNAs.</text>
</comment>
<comment type="catalytic activity">
    <reaction evidence="1">
        <text>uridine(55) in tRNA = pseudouridine(55) in tRNA</text>
        <dbReference type="Rhea" id="RHEA:42532"/>
        <dbReference type="Rhea" id="RHEA-COMP:10101"/>
        <dbReference type="Rhea" id="RHEA-COMP:10102"/>
        <dbReference type="ChEBI" id="CHEBI:65314"/>
        <dbReference type="ChEBI" id="CHEBI:65315"/>
        <dbReference type="EC" id="5.4.99.25"/>
    </reaction>
</comment>
<comment type="similarity">
    <text evidence="1">Belongs to the pseudouridine synthase TruB family. Type 1 subfamily.</text>
</comment>
<feature type="chain" id="PRO_1000084553" description="tRNA pseudouridine synthase B">
    <location>
        <begin position="1"/>
        <end position="244"/>
    </location>
</feature>
<feature type="active site" description="Nucleophile" evidence="1">
    <location>
        <position position="46"/>
    </location>
</feature>
<proteinExistence type="inferred from homology"/>
<organism>
    <name type="scientific">Bordetella avium (strain 197N)</name>
    <dbReference type="NCBI Taxonomy" id="360910"/>
    <lineage>
        <taxon>Bacteria</taxon>
        <taxon>Pseudomonadati</taxon>
        <taxon>Pseudomonadota</taxon>
        <taxon>Betaproteobacteria</taxon>
        <taxon>Burkholderiales</taxon>
        <taxon>Alcaligenaceae</taxon>
        <taxon>Bordetella</taxon>
    </lineage>
</organism>